<reference key="1">
    <citation type="journal article" date="2004" name="Plant Physiol.">
        <title>A comparison of rice chloroplast genomes.</title>
        <authorList>
            <person name="Tang J."/>
            <person name="Xia H."/>
            <person name="Cao M."/>
            <person name="Zhang X."/>
            <person name="Zeng W."/>
            <person name="Hu S."/>
            <person name="Tong W."/>
            <person name="Wang J."/>
            <person name="Wang J."/>
            <person name="Yu J."/>
            <person name="Yang H."/>
            <person name="Zhu L."/>
        </authorList>
    </citation>
    <scope>NUCLEOTIDE SEQUENCE [LARGE SCALE GENOMIC DNA]</scope>
    <source>
        <strain>cv. PA64s</strain>
    </source>
</reference>
<dbReference type="EMBL" id="AY522331">
    <property type="protein sequence ID" value="AAS46215.1"/>
    <property type="molecule type" value="Genomic_DNA"/>
</dbReference>
<dbReference type="EMBL" id="AY522331">
    <property type="protein sequence ID" value="AAS46226.1"/>
    <property type="molecule type" value="Genomic_DNA"/>
</dbReference>
<dbReference type="SMR" id="P0C468"/>
<dbReference type="KEGG" id="osa:3131437"/>
<dbReference type="KEGG" id="osa:3131438"/>
<dbReference type="GO" id="GO:0009507">
    <property type="term" value="C:chloroplast"/>
    <property type="evidence" value="ECO:0007669"/>
    <property type="project" value="UniProtKB-SubCell"/>
</dbReference>
<dbReference type="GO" id="GO:0009536">
    <property type="term" value="C:plastid"/>
    <property type="evidence" value="ECO:0000305"/>
    <property type="project" value="Gramene"/>
</dbReference>
<dbReference type="GO" id="GO:1990904">
    <property type="term" value="C:ribonucleoprotein complex"/>
    <property type="evidence" value="ECO:0007669"/>
    <property type="project" value="UniProtKB-KW"/>
</dbReference>
<dbReference type="GO" id="GO:0005840">
    <property type="term" value="C:ribosome"/>
    <property type="evidence" value="ECO:0007669"/>
    <property type="project" value="UniProtKB-KW"/>
</dbReference>
<dbReference type="GO" id="GO:0003735">
    <property type="term" value="F:structural constituent of ribosome"/>
    <property type="evidence" value="ECO:0007669"/>
    <property type="project" value="InterPro"/>
</dbReference>
<dbReference type="GO" id="GO:0006412">
    <property type="term" value="P:translation"/>
    <property type="evidence" value="ECO:0007669"/>
    <property type="project" value="UniProtKB-UniRule"/>
</dbReference>
<dbReference type="CDD" id="cd00353">
    <property type="entry name" value="Ribosomal_S15p_S13e"/>
    <property type="match status" value="1"/>
</dbReference>
<dbReference type="Gene3D" id="1.10.287.10">
    <property type="entry name" value="S15/NS1, RNA-binding"/>
    <property type="match status" value="1"/>
</dbReference>
<dbReference type="HAMAP" id="MF_01343_B">
    <property type="entry name" value="Ribosomal_uS15_B"/>
    <property type="match status" value="1"/>
</dbReference>
<dbReference type="InterPro" id="IPR000589">
    <property type="entry name" value="Ribosomal_uS15"/>
</dbReference>
<dbReference type="InterPro" id="IPR005290">
    <property type="entry name" value="Ribosomal_uS15_bac-type"/>
</dbReference>
<dbReference type="InterPro" id="IPR009068">
    <property type="entry name" value="uS15_NS1_RNA-bd_sf"/>
</dbReference>
<dbReference type="NCBIfam" id="TIGR00952">
    <property type="entry name" value="S15_bact"/>
    <property type="match status" value="1"/>
</dbReference>
<dbReference type="PANTHER" id="PTHR23321">
    <property type="entry name" value="RIBOSOMAL PROTEIN S15, BACTERIAL AND ORGANELLAR"/>
    <property type="match status" value="1"/>
</dbReference>
<dbReference type="PANTHER" id="PTHR23321:SF26">
    <property type="entry name" value="SMALL RIBOSOMAL SUBUNIT PROTEIN US15M"/>
    <property type="match status" value="1"/>
</dbReference>
<dbReference type="Pfam" id="PF00312">
    <property type="entry name" value="Ribosomal_S15"/>
    <property type="match status" value="1"/>
</dbReference>
<dbReference type="SMART" id="SM01387">
    <property type="entry name" value="Ribosomal_S15"/>
    <property type="match status" value="1"/>
</dbReference>
<dbReference type="SUPFAM" id="SSF47060">
    <property type="entry name" value="S15/NS1 RNA-binding domain"/>
    <property type="match status" value="1"/>
</dbReference>
<dbReference type="PROSITE" id="PS00362">
    <property type="entry name" value="RIBOSOMAL_S15"/>
    <property type="match status" value="1"/>
</dbReference>
<feature type="chain" id="PRO_0000115643" description="Small ribosomal subunit protein uS15c">
    <location>
        <begin position="1"/>
        <end position="90"/>
    </location>
</feature>
<comment type="subunit">
    <text evidence="1">Part of the 30S ribosomal subunit.</text>
</comment>
<comment type="subcellular location">
    <subcellularLocation>
        <location>Plastid</location>
        <location>Chloroplast</location>
    </subcellularLocation>
</comment>
<comment type="similarity">
    <text evidence="2">Belongs to the universal ribosomal protein uS15 family.</text>
</comment>
<sequence length="90" mass="10882">MKKKGGRKIFGFMVKEEKEENWGSVEFQVFSFTNKIRRLASHLELHKKDFSSERGLRRLLGKRQRLLAYLAKKNRVRYKKLISQLDIRER</sequence>
<organism>
    <name type="scientific">Oryza sativa</name>
    <name type="common">Rice</name>
    <dbReference type="NCBI Taxonomy" id="4530"/>
    <lineage>
        <taxon>Eukaryota</taxon>
        <taxon>Viridiplantae</taxon>
        <taxon>Streptophyta</taxon>
        <taxon>Embryophyta</taxon>
        <taxon>Tracheophyta</taxon>
        <taxon>Spermatophyta</taxon>
        <taxon>Magnoliopsida</taxon>
        <taxon>Liliopsida</taxon>
        <taxon>Poales</taxon>
        <taxon>Poaceae</taxon>
        <taxon>BOP clade</taxon>
        <taxon>Oryzoideae</taxon>
        <taxon>Oryzeae</taxon>
        <taxon>Oryzinae</taxon>
        <taxon>Oryza</taxon>
    </lineage>
</organism>
<keyword id="KW-0150">Chloroplast</keyword>
<keyword id="KW-0934">Plastid</keyword>
<keyword id="KW-0687">Ribonucleoprotein</keyword>
<keyword id="KW-0689">Ribosomal protein</keyword>
<gene>
    <name type="primary">rps15-A</name>
    <name type="ORF">PA162</name>
</gene>
<gene>
    <name type="primary">rps15-B</name>
    <name type="ORF">PA178</name>
</gene>
<proteinExistence type="inferred from homology"/>
<accession>P0C468</accession>
<accession>P12150</accession>
<accession>Q6QXX9</accession>
<accession>Q6QY31</accession>
<name>RR15_ORYSA</name>
<geneLocation type="chloroplast"/>
<evidence type="ECO:0000250" key="1"/>
<evidence type="ECO:0000305" key="2"/>
<protein>
    <recommendedName>
        <fullName evidence="2">Small ribosomal subunit protein uS15c</fullName>
    </recommendedName>
    <alternativeName>
        <fullName>30S ribosomal protein S15, chloroplastic</fullName>
    </alternativeName>
</protein>